<feature type="chain" id="PRO_0000453673" description="Protein argonaute 1">
    <location>
        <begin position="1"/>
        <end position="898"/>
    </location>
</feature>
<feature type="domain" description="PAZ" evidence="2">
    <location>
        <begin position="283"/>
        <end position="378"/>
    </location>
</feature>
<feature type="domain" description="Piwi" evidence="1">
    <location>
        <begin position="542"/>
        <end position="883"/>
    </location>
</feature>
<feature type="region of interest" description="Disordered" evidence="3">
    <location>
        <begin position="1"/>
        <end position="52"/>
    </location>
</feature>
<feature type="compositionally biased region" description="Basic and acidic residues" evidence="3">
    <location>
        <begin position="18"/>
        <end position="33"/>
    </location>
</feature>
<feature type="compositionally biased region" description="Gly residues" evidence="3">
    <location>
        <begin position="38"/>
        <end position="50"/>
    </location>
</feature>
<proteinExistence type="inferred from homology"/>
<evidence type="ECO:0000255" key="1"/>
<evidence type="ECO:0000255" key="2">
    <source>
        <dbReference type="PROSITE-ProRule" id="PRU00142"/>
    </source>
</evidence>
<evidence type="ECO:0000256" key="3">
    <source>
        <dbReference type="SAM" id="MobiDB-lite"/>
    </source>
</evidence>
<evidence type="ECO:0000269" key="4">
    <source>
    </source>
</evidence>
<evidence type="ECO:0000269" key="5">
    <source>
    </source>
</evidence>
<evidence type="ECO:0000303" key="6">
    <source>
    </source>
</evidence>
<evidence type="ECO:0000303" key="7">
    <source>
    </source>
</evidence>
<evidence type="ECO:0000305" key="8"/>
<evidence type="ECO:0000305" key="9">
    <source>
    </source>
</evidence>
<evidence type="ECO:0000312" key="10">
    <source>
        <dbReference type="EMBL" id="ACI22628.1"/>
    </source>
</evidence>
<name>AGO1_LEIBR</name>
<sequence length="898" mass="100596">MLALNAGSQYPGRGRGRGRGDGGNRVHKHDGINRYHGGFRGGRGGGGGGFRDGDMRECRERESWAVSAAQANARTLARVPVPVETNCFPIDLSEGRFHNYIVSFEFLENATDMAGDMWKISLQNELLRTIRKNRTAEKRTRTSAEVEDLCVCTGQAILAPAKLSVEDGFSIECTRKEKVSRNNTEERHYRVRIRYDGEVSLKLPEHAQWVNKIIAFGLADTYSEHIGSDYVDMKSTVERGGDLVTMDAISLNALRIVKQSGSTTAMMDVLQLDVSTKASTKTKCSDEMRRLRQQNPQGFRRAVNEALVGISVTTVFGEPTFLKVKAIDFNILASSPTMFKTNPEETFVEYFKRKYDAIIDPTLPMLYCIFADRTKMSRRMPYPADSLLLNKLNEAQLSKLPILCSIYPNERMKRIKAALERVLASPLMITVLQQYGVRIQPQFVKVSGRVLPAPTIYVPSGPNMFNRINTAEYTGQAGFALGLKDLQHPSQPCEFKTLLMDEYFMHGNITHWLQKYNVALPSPRKTSFDSAAQRITEGPGTFAMVKLRTKEAGAYNNFKERFARSSIVSQMAVVDLTRNVPQMITQQVAAKIGQLCFVADVDEAGKSFACRPLLIVGAVVGTAMNTMLEKYKSINVRLYTITFVAFLANGKSWKPYCMHHQVKGEEHVLYEDSDAASSHMSSTTLTVRRQNANEVLNNRFPDFLKEVTAHFKLNGKGSKGTMVLYRGAMTDAEVGFTANMDLVMEQVLPNWDTATVVVHPRSHFRMAWDPTTVFPHETASAYAGLSNVPRGFSTTDCRIILADSDPYTPVDSFYLSAANCTLGHAANTYYLVQKRAASISLMDLQKLTYNMCYMYPNKPDALPLPLPIKCAYEYARKYGSLKSVKELPTRMRPTMHYL</sequence>
<protein>
    <recommendedName>
        <fullName evidence="6">Protein argonaute 1</fullName>
        <shortName evidence="7">LbrAGO1</shortName>
    </recommendedName>
</protein>
<comment type="function">
    <text evidence="4 5">Involved in RNA-mediated gene silencing (RNAi) of mobile elements and repeats including retroposons SLACS (Spliced Leader Associated Conserved Sequence), TATE (Telomere-Associated Transposable Element) and TAS-like sequences (Telomere Associated Sequence), and a family of 74-nucleotide long tandem repeats, CIR74 (PubMed:21060810, PubMed:23217017). Predominantly binds to siRNAs derived from SLACS and TATE transposable elements and to a lesser extent to siRNAs from TAS-like and CIR74 elements (PubMed:23217017).</text>
</comment>
<comment type="subcellular location">
    <subcellularLocation>
        <location evidence="9">Cytoplasm</location>
    </subcellularLocation>
</comment>
<comment type="disruption phenotype">
    <text evidence="4 5">RNAi-mediated knockdown reduces RNAi activity (PubMed:21060810, PubMed:23217017). Levels of mobile elements TATE, SLACS, TAS-like and repeat element CIR74 siRNAs are reduced (PubMed:23217017).</text>
</comment>
<comment type="similarity">
    <text evidence="8">Belongs to the argonaute family.</text>
</comment>
<accession>G8XR08</accession>
<reference evidence="10" key="1">
    <citation type="journal article" date="2010" name="PLoS Pathog.">
        <title>Retention and loss of RNA interference pathways in trypanosomatid protozoans.</title>
        <authorList>
            <person name="Lye L.F."/>
            <person name="Owens K."/>
            <person name="Shi H."/>
            <person name="Murta S.M."/>
            <person name="Vieira A.C."/>
            <person name="Turco S.J."/>
            <person name="Tschudi C."/>
            <person name="Ullu E."/>
            <person name="Beverley S.M."/>
        </authorList>
    </citation>
    <scope>NUCLEOTIDE SEQUENCE [GENOMIC DNA]</scope>
    <scope>FUNCTION</scope>
    <scope>DISRUPTION PHENOTYPE</scope>
    <source>
        <strain evidence="10">MHOM/BR/75/M2903</strain>
    </source>
</reference>
<reference evidence="8" key="2">
    <citation type="journal article" date="2013" name="Mol. Microbiol.">
        <title>The structure and repertoire of small interfering RNAs in Leishmania (Viannia) braziliensis reveal diversification in the trypanosomatid RNAi pathway.</title>
        <authorList>
            <person name="Atayde V.D."/>
            <person name="Shi H."/>
            <person name="Franklin J.B."/>
            <person name="Carriero N."/>
            <person name="Notton T."/>
            <person name="Lye L.F."/>
            <person name="Owens K."/>
            <person name="Beverley S.M."/>
            <person name="Tschudi C."/>
            <person name="Ullu E."/>
        </authorList>
    </citation>
    <scope>FUNCTION</scope>
    <scope>SUBCELLULAR LOCATION</scope>
    <scope>DISRUPTION PHENOTYPE</scope>
    <source>
        <strain evidence="5">MHOM/BR/75/M2903</strain>
    </source>
</reference>
<gene>
    <name evidence="6" type="primary">AGO1</name>
</gene>
<keyword id="KW-0963">Cytoplasm</keyword>
<keyword id="KW-0694">RNA-binding</keyword>
<keyword id="KW-0943">RNA-mediated gene silencing</keyword>
<organism evidence="10">
    <name type="scientific">Leishmania braziliensis</name>
    <dbReference type="NCBI Taxonomy" id="5660"/>
    <lineage>
        <taxon>Eukaryota</taxon>
        <taxon>Discoba</taxon>
        <taxon>Euglenozoa</taxon>
        <taxon>Kinetoplastea</taxon>
        <taxon>Metakinetoplastina</taxon>
        <taxon>Trypanosomatida</taxon>
        <taxon>Trypanosomatidae</taxon>
        <taxon>Leishmaniinae</taxon>
        <taxon>Leishmania</taxon>
        <taxon>Leishmania braziliensis species complex</taxon>
    </lineage>
</organism>
<dbReference type="EMBL" id="EU780587">
    <property type="protein sequence ID" value="ACI22628.1"/>
    <property type="molecule type" value="Genomic_DNA"/>
</dbReference>
<dbReference type="SMR" id="G8XR08"/>
<dbReference type="VEuPathDB" id="TriTrypDB:LbrM.11.0360"/>
<dbReference type="GO" id="GO:0005737">
    <property type="term" value="C:cytoplasm"/>
    <property type="evidence" value="ECO:0007669"/>
    <property type="project" value="UniProtKB-SubCell"/>
</dbReference>
<dbReference type="GO" id="GO:0003723">
    <property type="term" value="F:RNA binding"/>
    <property type="evidence" value="ECO:0000315"/>
    <property type="project" value="UniProtKB"/>
</dbReference>
<dbReference type="GO" id="GO:0031047">
    <property type="term" value="P:regulatory ncRNA-mediated gene silencing"/>
    <property type="evidence" value="ECO:0000315"/>
    <property type="project" value="UniProtKB"/>
</dbReference>
<dbReference type="Gene3D" id="2.170.260.10">
    <property type="entry name" value="paz domain"/>
    <property type="match status" value="1"/>
</dbReference>
<dbReference type="Gene3D" id="3.30.420.10">
    <property type="entry name" value="Ribonuclease H-like superfamily/Ribonuclease H"/>
    <property type="match status" value="1"/>
</dbReference>
<dbReference type="InterPro" id="IPR032472">
    <property type="entry name" value="ArgoL2"/>
</dbReference>
<dbReference type="InterPro" id="IPR003100">
    <property type="entry name" value="PAZ_dom"/>
</dbReference>
<dbReference type="InterPro" id="IPR036085">
    <property type="entry name" value="PAZ_dom_sf"/>
</dbReference>
<dbReference type="InterPro" id="IPR003165">
    <property type="entry name" value="Piwi"/>
</dbReference>
<dbReference type="InterPro" id="IPR012337">
    <property type="entry name" value="RNaseH-like_sf"/>
</dbReference>
<dbReference type="InterPro" id="IPR036397">
    <property type="entry name" value="RNaseH_sf"/>
</dbReference>
<dbReference type="PANTHER" id="PTHR22891">
    <property type="entry name" value="EUKARYOTIC TRANSLATION INITIATION FACTOR 2C"/>
    <property type="match status" value="1"/>
</dbReference>
<dbReference type="Pfam" id="PF16488">
    <property type="entry name" value="ArgoL2"/>
    <property type="match status" value="1"/>
</dbReference>
<dbReference type="Pfam" id="PF02170">
    <property type="entry name" value="PAZ"/>
    <property type="match status" value="1"/>
</dbReference>
<dbReference type="SMART" id="SM00949">
    <property type="entry name" value="PAZ"/>
    <property type="match status" value="1"/>
</dbReference>
<dbReference type="SMART" id="SM00950">
    <property type="entry name" value="Piwi"/>
    <property type="match status" value="1"/>
</dbReference>
<dbReference type="SUPFAM" id="SSF101690">
    <property type="entry name" value="PAZ domain"/>
    <property type="match status" value="1"/>
</dbReference>
<dbReference type="SUPFAM" id="SSF53098">
    <property type="entry name" value="Ribonuclease H-like"/>
    <property type="match status" value="1"/>
</dbReference>
<dbReference type="PROSITE" id="PS50821">
    <property type="entry name" value="PAZ"/>
    <property type="match status" value="1"/>
</dbReference>